<comment type="function">
    <text evidence="1">Photosystem II (PSII) is a light-driven water:plastoquinone oxidoreductase that uses light energy to abstract electrons from H(2)O, generating O(2) and a proton gradient subsequently used for ATP formation. It consists of a core antenna complex that captures photons, and an electron transfer chain that converts photonic excitation into a charge separation. The D1/D2 (PsbA/PsbD) reaction center heterodimer binds P680, the primary electron donor of PSII as well as several subsequent electron acceptors.</text>
</comment>
<comment type="catalytic activity">
    <reaction evidence="1">
        <text>2 a plastoquinone + 4 hnu + 2 H2O = 2 a plastoquinol + O2</text>
        <dbReference type="Rhea" id="RHEA:36359"/>
        <dbReference type="Rhea" id="RHEA-COMP:9561"/>
        <dbReference type="Rhea" id="RHEA-COMP:9562"/>
        <dbReference type="ChEBI" id="CHEBI:15377"/>
        <dbReference type="ChEBI" id="CHEBI:15379"/>
        <dbReference type="ChEBI" id="CHEBI:17757"/>
        <dbReference type="ChEBI" id="CHEBI:30212"/>
        <dbReference type="ChEBI" id="CHEBI:62192"/>
        <dbReference type="EC" id="1.10.3.9"/>
    </reaction>
</comment>
<comment type="cofactor">
    <text evidence="1">The D1/D2 heterodimer binds P680, chlorophylls that are the primary electron donor of PSII, and subsequent electron acceptors. It shares a non-heme iron and each subunit binds pheophytin, quinone, additional chlorophylls, carotenoids and lipids. D1 provides most of the ligands for the Mn4-Ca-O5 cluster of the oxygen-evolving complex (OEC). There is also a Cl(-1) ion associated with D1 and D2, which is required for oxygen evolution. The PSII complex binds additional chlorophylls, carotenoids and specific lipids.</text>
</comment>
<comment type="subunit">
    <text evidence="1">PSII is composed of 1 copy each of membrane proteins PsbA, PsbB, PsbC, PsbD, PsbE, PsbF, PsbH, PsbI, PsbJ, PsbK, PsbL, PsbM, PsbT, PsbX, PsbY, PsbZ, Psb30/Ycf12, peripheral proteins PsbO, CyanoQ (PsbQ), PsbU, PsbV and a large number of cofactors. It forms dimeric complexes.</text>
</comment>
<comment type="subcellular location">
    <subcellularLocation>
        <location evidence="1">Cellular thylakoid membrane</location>
        <topology evidence="1">Multi-pass membrane protein</topology>
    </subcellularLocation>
</comment>
<comment type="PTM">
    <text evidence="1">Tyr-160 forms a radical intermediate that is referred to as redox-active TyrZ, YZ or Y-Z.</text>
</comment>
<comment type="PTM">
    <text evidence="1">C-terminally processed by CtpA; processing is essential to allow assembly of the oxygen-evolving complex and thus photosynthetic growth.</text>
</comment>
<comment type="miscellaneous">
    <text evidence="1">Cyanobacteria usually contain more than 2 copies of the psbA gene.</text>
</comment>
<comment type="miscellaneous">
    <text evidence="1">2 of the reaction center chlorophylls (ChlD1 and ChlD2) are entirely coordinated by water.</text>
</comment>
<comment type="miscellaneous">
    <text evidence="1">Herbicides such as atrazine, BNT, diuron or ioxynil bind in the Q(B) binding site and block subsequent electron transfer.</text>
</comment>
<comment type="similarity">
    <text evidence="1">Belongs to the reaction center PufL/M/PsbA/D family.</text>
</comment>
<reference key="1">
    <citation type="submission" date="2005-08" db="EMBL/GenBank/DDBJ databases">
        <title>Complete sequence of Synechococcus sp. CC9902.</title>
        <authorList>
            <person name="Copeland A."/>
            <person name="Lucas S."/>
            <person name="Lapidus A."/>
            <person name="Barry K."/>
            <person name="Detter J.C."/>
            <person name="Glavina T."/>
            <person name="Hammon N."/>
            <person name="Israni S."/>
            <person name="Pitluck S."/>
            <person name="Martinez M."/>
            <person name="Schmutz J."/>
            <person name="Larimer F."/>
            <person name="Land M."/>
            <person name="Kyrpides N."/>
            <person name="Ivanova N."/>
            <person name="Richardson P."/>
        </authorList>
    </citation>
    <scope>NUCLEOTIDE SEQUENCE [LARGE SCALE GENOMIC DNA]</scope>
    <source>
        <strain>CC9902</strain>
    </source>
</reference>
<organism>
    <name type="scientific">Synechococcus sp. (strain CC9902)</name>
    <dbReference type="NCBI Taxonomy" id="316279"/>
    <lineage>
        <taxon>Bacteria</taxon>
        <taxon>Bacillati</taxon>
        <taxon>Cyanobacteriota</taxon>
        <taxon>Cyanophyceae</taxon>
        <taxon>Synechococcales</taxon>
        <taxon>Synechococcaceae</taxon>
        <taxon>Synechococcus</taxon>
    </lineage>
</organism>
<name>PSBA1_SYNS9</name>
<proteinExistence type="inferred from homology"/>
<protein>
    <recommendedName>
        <fullName evidence="1">Photosystem II protein D1 1</fullName>
        <shortName evidence="1">PSII D1 protein 1</shortName>
        <ecNumber evidence="1">1.10.3.9</ecNumber>
    </recommendedName>
    <alternativeName>
        <fullName evidence="1">Photosystem II Q(B) protein 1</fullName>
    </alternativeName>
</protein>
<gene>
    <name evidence="1 2" type="primary">psbA1</name>
    <name type="ordered locus">Syncc9902_0943</name>
</gene>
<feature type="chain" id="PRO_0000316398" description="Photosystem II protein D1 1" evidence="1">
    <location>
        <begin position="1"/>
        <end position="343"/>
    </location>
</feature>
<feature type="propeptide" id="PRO_0000316399" evidence="1">
    <location>
        <begin position="344"/>
        <end position="358"/>
    </location>
</feature>
<feature type="transmembrane region" description="Helical" evidence="1">
    <location>
        <begin position="28"/>
        <end position="45"/>
    </location>
</feature>
<feature type="transmembrane region" description="Helical" evidence="1">
    <location>
        <begin position="117"/>
        <end position="132"/>
    </location>
</feature>
<feature type="transmembrane region" description="Helical" evidence="1">
    <location>
        <begin position="141"/>
        <end position="155"/>
    </location>
</feature>
<feature type="transmembrane region" description="Helical" evidence="1">
    <location>
        <begin position="196"/>
        <end position="217"/>
    </location>
</feature>
<feature type="transmembrane region" description="Helical" evidence="1">
    <location>
        <begin position="273"/>
        <end position="287"/>
    </location>
</feature>
<feature type="binding site" description="axial binding residue" evidence="1">
    <location>
        <position position="117"/>
    </location>
    <ligand>
        <name>chlorophyll a</name>
        <dbReference type="ChEBI" id="CHEBI:58416"/>
        <label>ChlzD1</label>
    </ligand>
    <ligandPart>
        <name>Mg</name>
        <dbReference type="ChEBI" id="CHEBI:25107"/>
    </ligandPart>
</feature>
<feature type="binding site" evidence="1">
    <location>
        <position position="125"/>
    </location>
    <ligand>
        <name>pheophytin a</name>
        <dbReference type="ChEBI" id="CHEBI:136840"/>
        <label>D1</label>
    </ligand>
</feature>
<feature type="binding site" evidence="1">
    <location>
        <position position="169"/>
    </location>
    <ligand>
        <name>[CaMn4O5] cluster</name>
        <dbReference type="ChEBI" id="CHEBI:189552"/>
    </ligand>
</feature>
<feature type="binding site" evidence="1">
    <location>
        <position position="188"/>
    </location>
    <ligand>
        <name>[CaMn4O5] cluster</name>
        <dbReference type="ChEBI" id="CHEBI:189552"/>
    </ligand>
</feature>
<feature type="binding site" description="axial binding residue" evidence="1">
    <location>
        <position position="197"/>
    </location>
    <ligand>
        <name>chlorophyll a</name>
        <dbReference type="ChEBI" id="CHEBI:58416"/>
        <label>PD1</label>
    </ligand>
    <ligandPart>
        <name>Mg</name>
        <dbReference type="ChEBI" id="CHEBI:25107"/>
    </ligandPart>
</feature>
<feature type="binding site" evidence="1">
    <location>
        <position position="214"/>
    </location>
    <ligand>
        <name>a quinone</name>
        <dbReference type="ChEBI" id="CHEBI:132124"/>
        <label>B</label>
    </ligand>
</feature>
<feature type="binding site" evidence="1">
    <location>
        <position position="214"/>
    </location>
    <ligand>
        <name>Fe cation</name>
        <dbReference type="ChEBI" id="CHEBI:24875"/>
        <note>ligand shared with heterodimeric partner</note>
    </ligand>
</feature>
<feature type="binding site" evidence="1">
    <location>
        <begin position="263"/>
        <end position="264"/>
    </location>
    <ligand>
        <name>a quinone</name>
        <dbReference type="ChEBI" id="CHEBI:132124"/>
        <label>B</label>
    </ligand>
</feature>
<feature type="binding site" evidence="1">
    <location>
        <position position="271"/>
    </location>
    <ligand>
        <name>Fe cation</name>
        <dbReference type="ChEBI" id="CHEBI:24875"/>
        <note>ligand shared with heterodimeric partner</note>
    </ligand>
</feature>
<feature type="binding site" evidence="1">
    <location>
        <position position="331"/>
    </location>
    <ligand>
        <name>[CaMn4O5] cluster</name>
        <dbReference type="ChEBI" id="CHEBI:189552"/>
    </ligand>
</feature>
<feature type="binding site" evidence="1">
    <location>
        <position position="332"/>
    </location>
    <ligand>
        <name>[CaMn4O5] cluster</name>
        <dbReference type="ChEBI" id="CHEBI:189552"/>
    </ligand>
</feature>
<feature type="binding site" evidence="1">
    <location>
        <position position="341"/>
    </location>
    <ligand>
        <name>[CaMn4O5] cluster</name>
        <dbReference type="ChEBI" id="CHEBI:189552"/>
    </ligand>
</feature>
<feature type="binding site" evidence="1">
    <location>
        <position position="343"/>
    </location>
    <ligand>
        <name>[CaMn4O5] cluster</name>
        <dbReference type="ChEBI" id="CHEBI:189552"/>
    </ligand>
</feature>
<feature type="site" description="Tyrosine radical intermediate" evidence="1">
    <location>
        <position position="160"/>
    </location>
</feature>
<feature type="site" description="Stabilizes free radical intermediate" evidence="1">
    <location>
        <position position="189"/>
    </location>
</feature>
<feature type="site" description="Cleavage; by CtpA" evidence="1">
    <location>
        <begin position="343"/>
        <end position="344"/>
    </location>
</feature>
<keyword id="KW-0106">Calcium</keyword>
<keyword id="KW-0148">Chlorophyll</keyword>
<keyword id="KW-0157">Chromophore</keyword>
<keyword id="KW-0249">Electron transport</keyword>
<keyword id="KW-0359">Herbicide resistance</keyword>
<keyword id="KW-0408">Iron</keyword>
<keyword id="KW-0460">Magnesium</keyword>
<keyword id="KW-0464">Manganese</keyword>
<keyword id="KW-0472">Membrane</keyword>
<keyword id="KW-0479">Metal-binding</keyword>
<keyword id="KW-0560">Oxidoreductase</keyword>
<keyword id="KW-0602">Photosynthesis</keyword>
<keyword id="KW-0604">Photosystem II</keyword>
<keyword id="KW-1185">Reference proteome</keyword>
<keyword id="KW-0793">Thylakoid</keyword>
<keyword id="KW-0812">Transmembrane</keyword>
<keyword id="KW-1133">Transmembrane helix</keyword>
<keyword id="KW-0813">Transport</keyword>
<dbReference type="EC" id="1.10.3.9" evidence="1"/>
<dbReference type="EMBL" id="CP000097">
    <property type="protein sequence ID" value="ABB25909.1"/>
    <property type="molecule type" value="Genomic_DNA"/>
</dbReference>
<dbReference type="SMR" id="Q3AYB8"/>
<dbReference type="STRING" id="316279.Syncc9902_0943"/>
<dbReference type="KEGG" id="sye:Syncc9902_0943"/>
<dbReference type="eggNOG" id="ENOG502Z87P">
    <property type="taxonomic scope" value="Bacteria"/>
</dbReference>
<dbReference type="HOGENOM" id="CLU_054206_1_0_3"/>
<dbReference type="OrthoDB" id="505356at2"/>
<dbReference type="Proteomes" id="UP000002712">
    <property type="component" value="Chromosome"/>
</dbReference>
<dbReference type="GO" id="GO:0009523">
    <property type="term" value="C:photosystem II"/>
    <property type="evidence" value="ECO:0007669"/>
    <property type="project" value="UniProtKB-KW"/>
</dbReference>
<dbReference type="GO" id="GO:0031676">
    <property type="term" value="C:plasma membrane-derived thylakoid membrane"/>
    <property type="evidence" value="ECO:0007669"/>
    <property type="project" value="UniProtKB-SubCell"/>
</dbReference>
<dbReference type="GO" id="GO:0016168">
    <property type="term" value="F:chlorophyll binding"/>
    <property type="evidence" value="ECO:0007669"/>
    <property type="project" value="UniProtKB-UniRule"/>
</dbReference>
<dbReference type="GO" id="GO:0045156">
    <property type="term" value="F:electron transporter, transferring electrons within the cyclic electron transport pathway of photosynthesis activity"/>
    <property type="evidence" value="ECO:0007669"/>
    <property type="project" value="InterPro"/>
</dbReference>
<dbReference type="GO" id="GO:0005506">
    <property type="term" value="F:iron ion binding"/>
    <property type="evidence" value="ECO:0007669"/>
    <property type="project" value="UniProtKB-UniRule"/>
</dbReference>
<dbReference type="GO" id="GO:0016682">
    <property type="term" value="F:oxidoreductase activity, acting on diphenols and related substances as donors, oxygen as acceptor"/>
    <property type="evidence" value="ECO:0007669"/>
    <property type="project" value="UniProtKB-UniRule"/>
</dbReference>
<dbReference type="GO" id="GO:0010242">
    <property type="term" value="F:oxygen evolving activity"/>
    <property type="evidence" value="ECO:0007669"/>
    <property type="project" value="UniProtKB-EC"/>
</dbReference>
<dbReference type="GO" id="GO:0009772">
    <property type="term" value="P:photosynthetic electron transport in photosystem II"/>
    <property type="evidence" value="ECO:0007669"/>
    <property type="project" value="InterPro"/>
</dbReference>
<dbReference type="GO" id="GO:0009635">
    <property type="term" value="P:response to herbicide"/>
    <property type="evidence" value="ECO:0007669"/>
    <property type="project" value="UniProtKB-KW"/>
</dbReference>
<dbReference type="FunFam" id="1.20.85.10:FF:000002">
    <property type="entry name" value="Photosystem II protein D1"/>
    <property type="match status" value="1"/>
</dbReference>
<dbReference type="Gene3D" id="1.20.85.10">
    <property type="entry name" value="Photosystem II protein D1-like"/>
    <property type="match status" value="1"/>
</dbReference>
<dbReference type="HAMAP" id="MF_01379">
    <property type="entry name" value="PSII_PsbA_D1"/>
    <property type="match status" value="1"/>
</dbReference>
<dbReference type="InterPro" id="IPR055266">
    <property type="entry name" value="D1/D2"/>
</dbReference>
<dbReference type="InterPro" id="IPR036854">
    <property type="entry name" value="Photo_II_D1/D2_sf"/>
</dbReference>
<dbReference type="InterPro" id="IPR000484">
    <property type="entry name" value="Photo_RC_L/M"/>
</dbReference>
<dbReference type="InterPro" id="IPR055265">
    <property type="entry name" value="Photo_RC_L/M_CS"/>
</dbReference>
<dbReference type="InterPro" id="IPR005867">
    <property type="entry name" value="PSII_D1"/>
</dbReference>
<dbReference type="NCBIfam" id="TIGR01151">
    <property type="entry name" value="psbA"/>
    <property type="match status" value="1"/>
</dbReference>
<dbReference type="PANTHER" id="PTHR33149:SF12">
    <property type="entry name" value="PHOTOSYSTEM II D2 PROTEIN"/>
    <property type="match status" value="1"/>
</dbReference>
<dbReference type="PANTHER" id="PTHR33149">
    <property type="entry name" value="PHOTOSYSTEM II PROTEIN D1"/>
    <property type="match status" value="1"/>
</dbReference>
<dbReference type="Pfam" id="PF00124">
    <property type="entry name" value="Photo_RC"/>
    <property type="match status" value="1"/>
</dbReference>
<dbReference type="PRINTS" id="PR00256">
    <property type="entry name" value="REACTNCENTRE"/>
</dbReference>
<dbReference type="SUPFAM" id="SSF81483">
    <property type="entry name" value="Bacterial photosystem II reaction centre, L and M subunits"/>
    <property type="match status" value="1"/>
</dbReference>
<dbReference type="PROSITE" id="PS00244">
    <property type="entry name" value="REACTION_CENTER"/>
    <property type="match status" value="1"/>
</dbReference>
<evidence type="ECO:0000255" key="1">
    <source>
        <dbReference type="HAMAP-Rule" id="MF_01379"/>
    </source>
</evidence>
<evidence type="ECO:0000305" key="2"/>
<accession>Q3AYB8</accession>
<sequence length="358" mass="39279">MSTAIRSGRQSNWGSFCDWVTNTNNRIYVGWFGVLMIPCLLAATICFIIAFVAAPPVDIDGIREPVAGSLIYGNNIISGAVVPSSNAIGLHFYPIWEAASLDEWLYNGGPFQLVVFHFLIGISAYMGRQWELSYRLGMRPWICVAYSAPLSAAFAVFLVYPFGQGSFSDAMPLGISGTFNYMLVFQAEHNILMHPFHMLGVAGVFGGSLFSAMHGSLVTSSLVRETTESESQNYGYKFGQEEETYNIVAAHGYFGRLIFQYASFNNSRSLHFFLGAWPVIGIWFTSMGISTMAFNLNGFNFNQSILDGQGRVVSTWADVLNRAGLGMEVMHERNAHNFPLDLAAAESTPVALQAPAIG</sequence>